<sequence>MGSTTLLKESGPREVFCGLTSIVWLHRRMPDAFFLVVGSRTCAHLIQSAAGVMIFAEPRFGTAILEERDLAGLADAHEELDRVVNDLLARRPEIRTLFLVGSCPSEVIKLDLARVAERLNGQLQGGVRVLNYSGSGIETTFTQGEDGALKAMVPLMPNSNEAQLLLVGTMANAVEDRLKHLFERLGIPSVSSLPPRQSTDLPSVGPGTRVLLTQPYLTDTARELKDRGAEILQAPFPLGAEGSRLWMEAAAQAFGINGSHVATILEPLMVRAQKALSPYKEQLAGKRIFLMPESQLEIPLARFLHRECGMELVEVGVPYLNRDMMQSELELLPPNTQVMEGQHVEKQLDRVREQRPDLVVCGMGLANPLEAEEIATKWSIELIFSPIHGIDQAADLAELFARPLHRRDLLNNQLLVSV</sequence>
<evidence type="ECO:0000255" key="1">
    <source>
        <dbReference type="HAMAP-Rule" id="MF_00352"/>
    </source>
</evidence>
<name>CHLN_PROM3</name>
<proteinExistence type="inferred from homology"/>
<gene>
    <name evidence="1" type="primary">chlN</name>
    <name type="ordered locus">P9303_07951</name>
</gene>
<organism>
    <name type="scientific">Prochlorococcus marinus (strain MIT 9303)</name>
    <dbReference type="NCBI Taxonomy" id="59922"/>
    <lineage>
        <taxon>Bacteria</taxon>
        <taxon>Bacillati</taxon>
        <taxon>Cyanobacteriota</taxon>
        <taxon>Cyanophyceae</taxon>
        <taxon>Synechococcales</taxon>
        <taxon>Prochlorococcaceae</taxon>
        <taxon>Prochlorococcus</taxon>
    </lineage>
</organism>
<protein>
    <recommendedName>
        <fullName evidence="1">Light-independent protochlorophyllide reductase subunit N</fullName>
        <shortName evidence="1">DPOR subunit N</shortName>
        <shortName evidence="1">LI-POR subunit N</shortName>
        <ecNumber evidence="1">1.3.7.7</ecNumber>
    </recommendedName>
</protein>
<reference key="1">
    <citation type="journal article" date="2007" name="PLoS Genet.">
        <title>Patterns and implications of gene gain and loss in the evolution of Prochlorococcus.</title>
        <authorList>
            <person name="Kettler G.C."/>
            <person name="Martiny A.C."/>
            <person name="Huang K."/>
            <person name="Zucker J."/>
            <person name="Coleman M.L."/>
            <person name="Rodrigue S."/>
            <person name="Chen F."/>
            <person name="Lapidus A."/>
            <person name="Ferriera S."/>
            <person name="Johnson J."/>
            <person name="Steglich C."/>
            <person name="Church G.M."/>
            <person name="Richardson P."/>
            <person name="Chisholm S.W."/>
        </authorList>
    </citation>
    <scope>NUCLEOTIDE SEQUENCE [LARGE SCALE GENOMIC DNA]</scope>
    <source>
        <strain>MIT 9303</strain>
    </source>
</reference>
<dbReference type="EC" id="1.3.7.7" evidence="1"/>
<dbReference type="EMBL" id="CP000554">
    <property type="protein sequence ID" value="ABM77546.1"/>
    <property type="molecule type" value="Genomic_DNA"/>
</dbReference>
<dbReference type="RefSeq" id="WP_011825460.1">
    <property type="nucleotide sequence ID" value="NC_008820.1"/>
</dbReference>
<dbReference type="SMR" id="A2C7T6"/>
<dbReference type="STRING" id="59922.P9303_07951"/>
<dbReference type="KEGG" id="pmf:P9303_07951"/>
<dbReference type="HOGENOM" id="CLU_037170_0_0_3"/>
<dbReference type="BioCyc" id="PMAR59922:G1G80-721-MONOMER"/>
<dbReference type="UniPathway" id="UPA00670"/>
<dbReference type="Proteomes" id="UP000002274">
    <property type="component" value="Chromosome"/>
</dbReference>
<dbReference type="GO" id="GO:0051539">
    <property type="term" value="F:4 iron, 4 sulfur cluster binding"/>
    <property type="evidence" value="ECO:0007669"/>
    <property type="project" value="UniProtKB-UniRule"/>
</dbReference>
<dbReference type="GO" id="GO:0005524">
    <property type="term" value="F:ATP binding"/>
    <property type="evidence" value="ECO:0007669"/>
    <property type="project" value="UniProtKB-UniRule"/>
</dbReference>
<dbReference type="GO" id="GO:0046872">
    <property type="term" value="F:metal ion binding"/>
    <property type="evidence" value="ECO:0007669"/>
    <property type="project" value="UniProtKB-KW"/>
</dbReference>
<dbReference type="GO" id="GO:0016730">
    <property type="term" value="F:oxidoreductase activity, acting on iron-sulfur proteins as donors"/>
    <property type="evidence" value="ECO:0007669"/>
    <property type="project" value="InterPro"/>
</dbReference>
<dbReference type="GO" id="GO:0016636">
    <property type="term" value="F:oxidoreductase activity, acting on the CH-CH group of donors, iron-sulfur protein as acceptor"/>
    <property type="evidence" value="ECO:0007669"/>
    <property type="project" value="UniProtKB-UniRule"/>
</dbReference>
<dbReference type="GO" id="GO:0036068">
    <property type="term" value="P:light-independent chlorophyll biosynthetic process"/>
    <property type="evidence" value="ECO:0007669"/>
    <property type="project" value="UniProtKB-UniRule"/>
</dbReference>
<dbReference type="GO" id="GO:0019685">
    <property type="term" value="P:photosynthesis, dark reaction"/>
    <property type="evidence" value="ECO:0007669"/>
    <property type="project" value="InterPro"/>
</dbReference>
<dbReference type="CDD" id="cd01979">
    <property type="entry name" value="Pchlide_reductase_N"/>
    <property type="match status" value="1"/>
</dbReference>
<dbReference type="Gene3D" id="3.40.50.1980">
    <property type="entry name" value="Nitrogenase molybdenum iron protein domain"/>
    <property type="match status" value="3"/>
</dbReference>
<dbReference type="HAMAP" id="MF_00352">
    <property type="entry name" value="ChlN_BchN"/>
    <property type="match status" value="1"/>
</dbReference>
<dbReference type="InterPro" id="IPR050293">
    <property type="entry name" value="LIPOR_BchN/ChlN"/>
</dbReference>
<dbReference type="InterPro" id="IPR000510">
    <property type="entry name" value="Nase/OxRdtase_comp1"/>
</dbReference>
<dbReference type="InterPro" id="IPR005970">
    <property type="entry name" value="Protochl_reductN"/>
</dbReference>
<dbReference type="NCBIfam" id="TIGR01279">
    <property type="entry name" value="DPOR_bchN"/>
    <property type="match status" value="1"/>
</dbReference>
<dbReference type="NCBIfam" id="NF002768">
    <property type="entry name" value="PRK02842.1"/>
    <property type="match status" value="1"/>
</dbReference>
<dbReference type="PANTHER" id="PTHR39429">
    <property type="entry name" value="LIGHT-INDEPENDENT PROTOCHLOROPHYLLIDE REDUCTASE SUBUNIT N"/>
    <property type="match status" value="1"/>
</dbReference>
<dbReference type="PANTHER" id="PTHR39429:SF3">
    <property type="entry name" value="LIGHT-INDEPENDENT PROTOCHLOROPHYLLIDE REDUCTASE SUBUNIT N"/>
    <property type="match status" value="1"/>
</dbReference>
<dbReference type="Pfam" id="PF00148">
    <property type="entry name" value="Oxidored_nitro"/>
    <property type="match status" value="1"/>
</dbReference>
<dbReference type="PIRSF" id="PIRSF000162">
    <property type="entry name" value="P_chlorophyll_rd"/>
    <property type="match status" value="1"/>
</dbReference>
<dbReference type="SUPFAM" id="SSF53807">
    <property type="entry name" value="Helical backbone' metal receptor"/>
    <property type="match status" value="1"/>
</dbReference>
<keyword id="KW-0004">4Fe-4S</keyword>
<keyword id="KW-0067">ATP-binding</keyword>
<keyword id="KW-0149">Chlorophyll biosynthesis</keyword>
<keyword id="KW-0408">Iron</keyword>
<keyword id="KW-0411">Iron-sulfur</keyword>
<keyword id="KW-0479">Metal-binding</keyword>
<keyword id="KW-0547">Nucleotide-binding</keyword>
<keyword id="KW-0560">Oxidoreductase</keyword>
<keyword id="KW-0602">Photosynthesis</keyword>
<feature type="chain" id="PRO_0000324012" description="Light-independent protochlorophyllide reductase subunit N">
    <location>
        <begin position="1"/>
        <end position="418"/>
    </location>
</feature>
<feature type="binding site" evidence="1">
    <location>
        <position position="17"/>
    </location>
    <ligand>
        <name>[4Fe-4S] cluster</name>
        <dbReference type="ChEBI" id="CHEBI:49883"/>
        <note>ligand shared with heterodimeric partner</note>
    </ligand>
</feature>
<feature type="binding site" evidence="1">
    <location>
        <position position="42"/>
    </location>
    <ligand>
        <name>[4Fe-4S] cluster</name>
        <dbReference type="ChEBI" id="CHEBI:49883"/>
        <note>ligand shared with heterodimeric partner</note>
    </ligand>
</feature>
<feature type="binding site" evidence="1">
    <location>
        <position position="103"/>
    </location>
    <ligand>
        <name>[4Fe-4S] cluster</name>
        <dbReference type="ChEBI" id="CHEBI:49883"/>
        <note>ligand shared with heterodimeric partner</note>
    </ligand>
</feature>
<accession>A2C7T6</accession>
<comment type="function">
    <text evidence="1">Component of the dark-operative protochlorophyllide reductase (DPOR) that uses Mg-ATP and reduced ferredoxin to reduce ring D of protochlorophyllide (Pchlide) to form chlorophyllide a (Chlide). This reaction is light-independent. The NB-protein (ChlN-ChlB) is the catalytic component of the complex.</text>
</comment>
<comment type="catalytic activity">
    <reaction evidence="1">
        <text>chlorophyllide a + oxidized 2[4Fe-4S]-[ferredoxin] + 2 ADP + 2 phosphate = protochlorophyllide a + reduced 2[4Fe-4S]-[ferredoxin] + 2 ATP + 2 H2O</text>
        <dbReference type="Rhea" id="RHEA:28202"/>
        <dbReference type="Rhea" id="RHEA-COMP:10002"/>
        <dbReference type="Rhea" id="RHEA-COMP:10004"/>
        <dbReference type="ChEBI" id="CHEBI:15377"/>
        <dbReference type="ChEBI" id="CHEBI:30616"/>
        <dbReference type="ChEBI" id="CHEBI:33722"/>
        <dbReference type="ChEBI" id="CHEBI:33723"/>
        <dbReference type="ChEBI" id="CHEBI:43474"/>
        <dbReference type="ChEBI" id="CHEBI:83348"/>
        <dbReference type="ChEBI" id="CHEBI:83350"/>
        <dbReference type="ChEBI" id="CHEBI:456216"/>
        <dbReference type="EC" id="1.3.7.7"/>
    </reaction>
</comment>
<comment type="cofactor">
    <cofactor evidence="1">
        <name>[4Fe-4S] cluster</name>
        <dbReference type="ChEBI" id="CHEBI:49883"/>
    </cofactor>
    <text evidence="1">Binds 1 [4Fe-4S] cluster per heterodimer. The cluster is bound at the heterodimer interface by residues from both subunits.</text>
</comment>
<comment type="pathway">
    <text evidence="1">Porphyrin-containing compound metabolism; chlorophyll biosynthesis (light-independent).</text>
</comment>
<comment type="subunit">
    <text evidence="1">Protochlorophyllide reductase is composed of three subunits; ChlL, ChlN and ChlB. Forms a heterotetramer of two ChlB and two ChlN subunits.</text>
</comment>
<comment type="similarity">
    <text evidence="1">Belongs to the BchN/ChlN family.</text>
</comment>